<feature type="chain" id="PRO_0000222149" description="Uncharacterized protein ORF75">
    <location>
        <begin position="1"/>
        <end position="423"/>
    </location>
</feature>
<organismHost>
    <name type="scientific">Ictaluridae</name>
    <name type="common">bullhead catfishes</name>
    <dbReference type="NCBI Taxonomy" id="7996"/>
</organismHost>
<protein>
    <recommendedName>
        <fullName>Uncharacterized protein ORF75</fullName>
    </recommendedName>
</protein>
<organism>
    <name type="scientific">Ictalurid herpesvirus 1 (strain Auburn)</name>
    <name type="common">IcHV-1</name>
    <name type="synonym">Channel catfish herpesvirus</name>
    <dbReference type="NCBI Taxonomy" id="766178"/>
    <lineage>
        <taxon>Viruses</taxon>
        <taxon>Duplodnaviria</taxon>
        <taxon>Heunggongvirae</taxon>
        <taxon>Peploviricota</taxon>
        <taxon>Herviviricetes</taxon>
        <taxon>Herpesvirales</taxon>
        <taxon>Alloherpesviridae</taxon>
        <taxon>Ictavirus</taxon>
        <taxon>Ictavirus ictaluridallo1</taxon>
        <taxon>Ictalurid herpesvirus 1</taxon>
    </lineage>
</organism>
<sequence length="423" mass="46532">MVNTLKSSQCVHCILEAYPPGAGPVSAIDERWIRIFMPGGETLMIDRRLVYEPGSPCTYHTGLDLVGAHIVPNNSFDFRDVETGRDLSDFRSCDFMEDVHPWFRVLLEITTDRLDGPHRGGETVVINFGRRGVPCGVYLCSHGVTASCITMGPPVQGMPETISITINPFGGWFSWLVLKPAGTGSRKPFANDLTRYLIRTSGFSTAGIDRFETRSPIILYGGGRWVLECVPHLHPTLTVAKESIECALDPGSIVVIWPGPALPVVRHVLETVLVDRVRDLVGTLAANFEDIFVHRVDDRRVTHRWVEIPKNAPRKKLSFTVTGHRPEVLAAMCGGGWRLGHTMPGMGFDTDLKVEPAPGVKLDGPPRQLHPEFLRAAMAKIEPLVAPIESELRGNTSLHAWTITVVALVGRFGILITALESLS</sequence>
<dbReference type="EMBL" id="M75136">
    <property type="protein sequence ID" value="AAA88177.1"/>
    <property type="molecule type" value="Genomic_DNA"/>
</dbReference>
<dbReference type="PIR" id="A36794">
    <property type="entry name" value="A36794"/>
</dbReference>
<dbReference type="RefSeq" id="NP_041165.1">
    <property type="nucleotide sequence ID" value="NC_001493.2"/>
</dbReference>
<dbReference type="GeneID" id="1488365"/>
<dbReference type="KEGG" id="vg:1488365"/>
<dbReference type="Proteomes" id="UP000007643">
    <property type="component" value="Segment"/>
</dbReference>
<gene>
    <name type="primary">ORF75</name>
</gene>
<accession>Q00129</accession>
<proteinExistence type="predicted"/>
<name>VG75_ICHVA</name>
<reference key="1">
    <citation type="journal article" date="1992" name="Virology">
        <title>Channel catfish virus: a new type of herpesvirus.</title>
        <authorList>
            <person name="Davison A.J."/>
        </authorList>
    </citation>
    <scope>NUCLEOTIDE SEQUENCE [LARGE SCALE GENOMIC DNA]</scope>
</reference>
<keyword id="KW-1185">Reference proteome</keyword>